<protein>
    <recommendedName>
        <fullName evidence="5">AA14 family lytic polysaccharide monooxygenase B</fullName>
        <shortName evidence="5">LPMO AA14B</shortName>
        <ecNumber evidence="3">1.14.99.-</ecNumber>
    </recommendedName>
</protein>
<name>LP14B_TRAC3</name>
<proteinExistence type="evidence at protein level"/>
<organism>
    <name type="scientific">Trametes coccinea (strain BRFM310)</name>
    <name type="common">Pycnoporus coccineus</name>
    <dbReference type="NCBI Taxonomy" id="1353009"/>
    <lineage>
        <taxon>Eukaryota</taxon>
        <taxon>Fungi</taxon>
        <taxon>Dikarya</taxon>
        <taxon>Basidiomycota</taxon>
        <taxon>Agaricomycotina</taxon>
        <taxon>Agaricomycetes</taxon>
        <taxon>Polyporales</taxon>
        <taxon>Polyporaceae</taxon>
        <taxon>Trametes</taxon>
    </lineage>
</organism>
<gene>
    <name evidence="5" type="primary">AA14B</name>
    <name type="ORF">PYCCODRAFT_1372210</name>
</gene>
<sequence length="418" mass="45554">MIPVFLAAVAAFLPLTSGHIAFWHNSMYGFNVTEQTFPYDNRPVVPLQYMTFQEWWFHNHLDYPPHPGDFFDFPAGKAATAELACNKGATTWFNSSEGGNIQNGNDPCPGSPPSEYHTTGIDDVKGCAMAIAYESDVRKIKPEDFTVFSVNQTCVWYRFTDFQVPERMPPCPPGGCHCAWFWIHSPDSGGEQIYMNGFQCNITGSTSHVPLAKPKVARRCGADPDHGKPDAVPGNCTYGAKQPLYWLQKEGNNEFDDYIAPPFYNDLYNFKDGAQNDIFVDSYPDGIPDPSPEQTIVPTPVNAAAVAAATPAPSSSGSSPSSSSPGSSSTASTTSTSGPRPSARGFRRSTGERPPTGVPTPRKSWTQTRKLRYVCLDRARIVLCCKGLALMVHRLALQRGRHQEPSAQGASLAFLAAG</sequence>
<evidence type="ECO:0000255" key="1">
    <source>
        <dbReference type="PROSITE-ProRule" id="PRU00498"/>
    </source>
</evidence>
<evidence type="ECO:0000256" key="2">
    <source>
        <dbReference type="SAM" id="MobiDB-lite"/>
    </source>
</evidence>
<evidence type="ECO:0000269" key="3">
    <source>
    </source>
</evidence>
<evidence type="ECO:0000269" key="4">
    <source>
    </source>
</evidence>
<evidence type="ECO:0000303" key="5">
    <source>
    </source>
</evidence>
<evidence type="ECO:0000305" key="6"/>
<evidence type="ECO:0007744" key="7">
    <source>
        <dbReference type="PDB" id="5NO7"/>
    </source>
</evidence>
<evidence type="ECO:0007829" key="8">
    <source>
        <dbReference type="PDB" id="5NO7"/>
    </source>
</evidence>
<keyword id="KW-0002">3D-structure</keyword>
<keyword id="KW-0186">Copper</keyword>
<keyword id="KW-1015">Disulfide bond</keyword>
<keyword id="KW-0325">Glycoprotein</keyword>
<keyword id="KW-0479">Metal-binding</keyword>
<keyword id="KW-0503">Monooxygenase</keyword>
<keyword id="KW-0560">Oxidoreductase</keyword>
<keyword id="KW-1185">Reference proteome</keyword>
<keyword id="KW-0964">Secreted</keyword>
<keyword id="KW-0732">Signal</keyword>
<feature type="signal peptide" evidence="3">
    <location>
        <begin position="1"/>
        <end position="18"/>
    </location>
</feature>
<feature type="chain" id="PRO_5014319006" description="AA14 family lytic polysaccharide monooxygenase B">
    <location>
        <begin position="19"/>
        <end position="418"/>
    </location>
</feature>
<feature type="region of interest" description="Disordered" evidence="2">
    <location>
        <begin position="307"/>
        <end position="364"/>
    </location>
</feature>
<feature type="compositionally biased region" description="Low complexity" evidence="2">
    <location>
        <begin position="307"/>
        <end position="343"/>
    </location>
</feature>
<feature type="glycosylation site" description="N-linked (GlcNAc...) asparagine" evidence="1">
    <location>
        <position position="31"/>
    </location>
</feature>
<feature type="glycosylation site" description="N-linked (GlcNAc...) asparagine" evidence="1">
    <location>
        <position position="94"/>
    </location>
</feature>
<feature type="glycosylation site" description="N-linked (GlcNAc...) asparagine" evidence="1">
    <location>
        <position position="151"/>
    </location>
</feature>
<feature type="glycosylation site" description="N-linked (GlcNAc...) asparagine" evidence="1">
    <location>
        <position position="201"/>
    </location>
</feature>
<feature type="glycosylation site" description="N-linked (GlcNAc...) asparagine" evidence="1">
    <location>
        <position position="235"/>
    </location>
</feature>
<feature type="disulfide bond" evidence="3 7">
    <location>
        <begin position="85"/>
        <end position="108"/>
    </location>
</feature>
<feature type="disulfide bond" evidence="3 7">
    <location>
        <begin position="127"/>
        <end position="154"/>
    </location>
</feature>
<feature type="disulfide bond" evidence="3 7">
    <location>
        <begin position="171"/>
        <end position="176"/>
    </location>
</feature>
<feature type="disulfide bond" evidence="3 7">
    <location>
        <begin position="178"/>
        <end position="200"/>
    </location>
</feature>
<feature type="disulfide bond" evidence="3 7">
    <location>
        <begin position="220"/>
        <end position="236"/>
    </location>
</feature>
<feature type="strand" evidence="8">
    <location>
        <begin position="21"/>
        <end position="23"/>
    </location>
</feature>
<feature type="turn" evidence="8">
    <location>
        <begin position="28"/>
        <end position="31"/>
    </location>
</feature>
<feature type="turn" evidence="8">
    <location>
        <begin position="34"/>
        <end position="36"/>
    </location>
</feature>
<feature type="strand" evidence="8">
    <location>
        <begin position="37"/>
        <end position="39"/>
    </location>
</feature>
<feature type="helix" evidence="8">
    <location>
        <begin position="52"/>
        <end position="55"/>
    </location>
</feature>
<feature type="helix" evidence="8">
    <location>
        <begin position="56"/>
        <end position="59"/>
    </location>
</feature>
<feature type="strand" evidence="8">
    <location>
        <begin position="71"/>
        <end position="74"/>
    </location>
</feature>
<feature type="strand" evidence="8">
    <location>
        <begin position="77"/>
        <end position="86"/>
    </location>
</feature>
<feature type="helix" evidence="8">
    <location>
        <begin position="87"/>
        <end position="89"/>
    </location>
</feature>
<feature type="helix" evidence="8">
    <location>
        <begin position="91"/>
        <end position="95"/>
    </location>
</feature>
<feature type="strand" evidence="8">
    <location>
        <begin position="96"/>
        <end position="98"/>
    </location>
</feature>
<feature type="helix" evidence="8">
    <location>
        <begin position="113"/>
        <end position="116"/>
    </location>
</feature>
<feature type="helix" evidence="8">
    <location>
        <begin position="121"/>
        <end position="123"/>
    </location>
</feature>
<feature type="strand" evidence="8">
    <location>
        <begin position="127"/>
        <end position="132"/>
    </location>
</feature>
<feature type="helix" evidence="8">
    <location>
        <begin position="137"/>
        <end position="139"/>
    </location>
</feature>
<feature type="turn" evidence="8">
    <location>
        <begin position="142"/>
        <end position="144"/>
    </location>
</feature>
<feature type="strand" evidence="8">
    <location>
        <begin position="146"/>
        <end position="153"/>
    </location>
</feature>
<feature type="strand" evidence="8">
    <location>
        <begin position="158"/>
        <end position="163"/>
    </location>
</feature>
<feature type="strand" evidence="8">
    <location>
        <begin position="176"/>
        <end position="182"/>
    </location>
</feature>
<feature type="strand" evidence="8">
    <location>
        <begin position="193"/>
        <end position="204"/>
    </location>
</feature>
<feature type="helix" evidence="8">
    <location>
        <begin position="224"/>
        <end position="226"/>
    </location>
</feature>
<feature type="helix" evidence="8">
    <location>
        <begin position="233"/>
        <end position="235"/>
    </location>
</feature>
<feature type="strand" evidence="8">
    <location>
        <begin position="247"/>
        <end position="250"/>
    </location>
</feature>
<feature type="helix" evidence="8">
    <location>
        <begin position="266"/>
        <end position="268"/>
    </location>
</feature>
<feature type="strand" evidence="8">
    <location>
        <begin position="272"/>
        <end position="274"/>
    </location>
</feature>
<comment type="function">
    <text evidence="3 4">Lytic polysaccharide monooxygenase (LPMO) that oxidatively cleaves xylan with both C1 and C4 regioselectivity and that specifically targets the protective shield made by heteroxylans that cover cellulose microfibrils in wood (PubMed:29377002, PubMed:32793303). Catalysis by LPMOs requires the reduction of the active-site copper from Cu(II) to Cu(I) by a reducing agent and H(2)O(2) or O(2) as a cosubstrate (PubMed:29377002). Cleavage occurs only when xylans are bound to cellulose and not when they are in solution (PubMed:29377002). Increases the efficiency of wood saccharification through oxidative cleavage of highly refractory xylan-coated cellulose fibers via synergistic relationship with xylan-active enzymes, xylobiohydrolases and cellobiohydrolases (PubMed:29377002, PubMed:32793303).</text>
</comment>
<comment type="cofactor">
    <cofactor evidence="3">
        <name>Cu(2+)</name>
        <dbReference type="ChEBI" id="CHEBI:29036"/>
    </cofactor>
    <text evidence="3">Binds 1 copper ion per subunit.</text>
</comment>
<comment type="subcellular location">
    <subcellularLocation>
        <location evidence="3">Secreted</location>
    </subcellularLocation>
</comment>
<comment type="mass spectrometry" mass="46450.0" method="MALDI" evidence="3"/>
<comment type="biotechnology">
    <text evidence="3 4">The unique enzyme activity of AA14 family LPMOs involved in the degradation of woody biomass in nature offers an innovative solution for improving enzyme cocktails for biorefinery applications.</text>
</comment>
<comment type="similarity">
    <text evidence="6">Belongs to the polysaccharide monooxygenase AA14 family.</text>
</comment>
<dbReference type="EC" id="1.14.99.-" evidence="3"/>
<dbReference type="EMBL" id="KY769370">
    <property type="protein sequence ID" value="AUM86167.1"/>
    <property type="molecule type" value="mRNA"/>
</dbReference>
<dbReference type="EMBL" id="KZ084123">
    <property type="protein sequence ID" value="OSC99905.1"/>
    <property type="molecule type" value="Genomic_DNA"/>
</dbReference>
<dbReference type="PDB" id="5NO7">
    <property type="method" value="X-ray"/>
    <property type="resolution" value="3.01 A"/>
    <property type="chains" value="A/B=19-305"/>
</dbReference>
<dbReference type="PDBsum" id="5NO7"/>
<dbReference type="SMR" id="A0A2I6QB00"/>
<dbReference type="OrthoDB" id="2019572at2759"/>
<dbReference type="BRENDA" id="1.14.99.54">
    <property type="organism ID" value="5234"/>
</dbReference>
<dbReference type="Proteomes" id="UP000193067">
    <property type="component" value="Unassembled WGS sequence"/>
</dbReference>
<dbReference type="GO" id="GO:0005576">
    <property type="term" value="C:extracellular region"/>
    <property type="evidence" value="ECO:0007669"/>
    <property type="project" value="UniProtKB-SubCell"/>
</dbReference>
<dbReference type="GO" id="GO:0046872">
    <property type="term" value="F:metal ion binding"/>
    <property type="evidence" value="ECO:0007669"/>
    <property type="project" value="UniProtKB-KW"/>
</dbReference>
<dbReference type="GO" id="GO:0004497">
    <property type="term" value="F:monooxygenase activity"/>
    <property type="evidence" value="ECO:0007669"/>
    <property type="project" value="UniProtKB-KW"/>
</dbReference>
<dbReference type="Gene3D" id="2.70.50.70">
    <property type="match status" value="1"/>
</dbReference>
<dbReference type="InterPro" id="IPR054497">
    <property type="entry name" value="LPMO_AA14"/>
</dbReference>
<dbReference type="Pfam" id="PF22810">
    <property type="entry name" value="LPMO_AA14"/>
    <property type="match status" value="1"/>
</dbReference>
<accession>A0A2I6QB00</accession>
<accession>A0A1Y2IFD5</accession>
<reference evidence="7" key="1">
    <citation type="journal article" date="2018" name="Nat. Chem. Biol.">
        <title>Lytic xylan oxidases from wood-decay fungi unlock biomass degradation.</title>
        <authorList>
            <person name="Couturier M."/>
            <person name="Ladeveze S."/>
            <person name="Sulzenbacher G."/>
            <person name="Ciano L."/>
            <person name="Fanuel M."/>
            <person name="Moreau C."/>
            <person name="Villares A."/>
            <person name="Cathala B."/>
            <person name="Chaspoul F."/>
            <person name="Frandsen K.E."/>
            <person name="Labourel A."/>
            <person name="Herpoel-Gimbert I."/>
            <person name="Grisel S."/>
            <person name="Haon M."/>
            <person name="Lenfant N."/>
            <person name="Rogniaux H."/>
            <person name="Ropartz D."/>
            <person name="Davies G.J."/>
            <person name="Rosso M.N."/>
            <person name="Walton P.H."/>
            <person name="Henrissat B."/>
            <person name="Berrin J.G."/>
        </authorList>
    </citation>
    <scope>NUCLEOTIDE SEQUENCE [MRNA]</scope>
    <scope>X-RAY CRYSTALLOGRAPHY (3.01 ANGSTROMS) OF 19-305</scope>
    <scope>MASS SPECTROMETRY</scope>
    <scope>DISULFIDE BONDS</scope>
    <scope>FUNCTION</scope>
    <scope>CATALYTIC ACTIVITY</scope>
    <scope>SUBSTRATE SPECIFICITY</scope>
    <scope>COFACTOR</scope>
    <scope>SUBCELLULAR LOCATION</scope>
    <scope>BIOTECHNOLOGY</scope>
    <source>
        <strain>BRFM310</strain>
    </source>
</reference>
<reference key="2">
    <citation type="journal article" date="2015" name="Biotechnol. Biofuels">
        <title>Enhanced degradation of softwood versus hardwood by the white-rot fungus Pycnoporus coccineus.</title>
        <authorList>
            <person name="Couturier M."/>
            <person name="Navarro D."/>
            <person name="Chevret D."/>
            <person name="Henrissat B."/>
            <person name="Piumi F."/>
            <person name="Ruiz-Duenas F.J."/>
            <person name="Martinez A.T."/>
            <person name="Grigoriev I.V."/>
            <person name="Riley R."/>
            <person name="Lipzen A."/>
            <person name="Berrin J.-G."/>
            <person name="Master E.R."/>
            <person name="Rosso M.-N."/>
        </authorList>
    </citation>
    <scope>NUCLEOTIDE SEQUENCE [LARGE SCALE GENOMIC DNA]</scope>
    <source>
        <strain>BRFM310</strain>
    </source>
</reference>
<reference key="3">
    <citation type="journal article" date="2020" name="Biotechnol. Biofuels">
        <title>A new synergistic relationship between xylan-active LPMO and xylobiohydrolase to tackle recalcitrant xylan.</title>
        <authorList>
            <person name="Zerva A."/>
            <person name="Pentari C."/>
            <person name="Grisel S."/>
            <person name="Berrin J.G."/>
            <person name="Topakas E."/>
        </authorList>
    </citation>
    <scope>FUNCTION</scope>
    <scope>CATALYTIC ACTIVITY</scope>
    <scope>BIOTECHNOLOGY</scope>
</reference>